<accession>C5A0S5</accession>
<evidence type="ECO:0000255" key="1">
    <source>
        <dbReference type="HAMAP-Rule" id="MF_00362"/>
    </source>
</evidence>
<evidence type="ECO:0000305" key="2"/>
<sequence>MALNLQDKQAIVAEVSEVAKGALSAVVADSRGVTVDKMTELRKAGREAGVYMRVVRNTLLRRAVEGTPFECLKDAFVGPTLIAYSMEHPGAAARLFKEFAKANAKFEVKAAAFEGELIPASQIDRLATLPTYEEAIARLMATMKEASAGKLVRTLAAVRDAKEAA</sequence>
<name>RL10_ECOBW</name>
<proteinExistence type="inferred from homology"/>
<protein>
    <recommendedName>
        <fullName evidence="1">Large ribosomal subunit protein uL10</fullName>
    </recommendedName>
    <alternativeName>
        <fullName evidence="2">50S ribosomal protein L10</fullName>
    </alternativeName>
</protein>
<comment type="function">
    <text evidence="1">Forms part of the ribosomal stalk, playing a central role in the interaction of the ribosome with GTP-bound translation factors.</text>
</comment>
<comment type="subunit">
    <text evidence="1">Part of the ribosomal stalk of the 50S ribosomal subunit. The N-terminus interacts with L11 and the large rRNA to form the base of the stalk. The C-terminus forms an elongated spine to which L12 dimers bind in a sequential fashion forming a multimeric L10(L12)X complex.</text>
</comment>
<comment type="similarity">
    <text evidence="1">Belongs to the universal ribosomal protein uL10 family.</text>
</comment>
<feature type="chain" id="PRO_1000205440" description="Large ribosomal subunit protein uL10">
    <location>
        <begin position="1"/>
        <end position="165"/>
    </location>
</feature>
<feature type="modified residue" description="N6-acetyllysine" evidence="1">
    <location>
        <position position="37"/>
    </location>
</feature>
<feature type="modified residue" description="N6-acetyllysine" evidence="1">
    <location>
        <position position="105"/>
    </location>
</feature>
<organism>
    <name type="scientific">Escherichia coli (strain K12 / MC4100 / BW2952)</name>
    <dbReference type="NCBI Taxonomy" id="595496"/>
    <lineage>
        <taxon>Bacteria</taxon>
        <taxon>Pseudomonadati</taxon>
        <taxon>Pseudomonadota</taxon>
        <taxon>Gammaproteobacteria</taxon>
        <taxon>Enterobacterales</taxon>
        <taxon>Enterobacteriaceae</taxon>
        <taxon>Escherichia</taxon>
    </lineage>
</organism>
<reference key="1">
    <citation type="journal article" date="2009" name="J. Bacteriol.">
        <title>Genomic sequencing reveals regulatory mutations and recombinational events in the widely used MC4100 lineage of Escherichia coli K-12.</title>
        <authorList>
            <person name="Ferenci T."/>
            <person name="Zhou Z."/>
            <person name="Betteridge T."/>
            <person name="Ren Y."/>
            <person name="Liu Y."/>
            <person name="Feng L."/>
            <person name="Reeves P.R."/>
            <person name="Wang L."/>
        </authorList>
    </citation>
    <scope>NUCLEOTIDE SEQUENCE [LARGE SCALE GENOMIC DNA]</scope>
    <source>
        <strain>K12 / MC4100 / BW2952</strain>
    </source>
</reference>
<gene>
    <name evidence="1" type="primary">rplJ</name>
    <name type="ordered locus">BWG_3644</name>
</gene>
<keyword id="KW-0007">Acetylation</keyword>
<keyword id="KW-0687">Ribonucleoprotein</keyword>
<keyword id="KW-0689">Ribosomal protein</keyword>
<keyword id="KW-0694">RNA-binding</keyword>
<keyword id="KW-0699">rRNA-binding</keyword>
<dbReference type="EMBL" id="CP001396">
    <property type="protein sequence ID" value="ACR61847.1"/>
    <property type="molecule type" value="Genomic_DNA"/>
</dbReference>
<dbReference type="RefSeq" id="WP_001207201.1">
    <property type="nucleotide sequence ID" value="NC_012759.1"/>
</dbReference>
<dbReference type="SMR" id="C5A0S5"/>
<dbReference type="GeneID" id="93777909"/>
<dbReference type="KEGG" id="ebw:BWG_3644"/>
<dbReference type="HOGENOM" id="CLU_092227_0_2_6"/>
<dbReference type="GO" id="GO:0015934">
    <property type="term" value="C:large ribosomal subunit"/>
    <property type="evidence" value="ECO:0007669"/>
    <property type="project" value="InterPro"/>
</dbReference>
<dbReference type="GO" id="GO:0070180">
    <property type="term" value="F:large ribosomal subunit rRNA binding"/>
    <property type="evidence" value="ECO:0007669"/>
    <property type="project" value="UniProtKB-UniRule"/>
</dbReference>
<dbReference type="GO" id="GO:0003735">
    <property type="term" value="F:structural constituent of ribosome"/>
    <property type="evidence" value="ECO:0007669"/>
    <property type="project" value="InterPro"/>
</dbReference>
<dbReference type="GO" id="GO:0006412">
    <property type="term" value="P:translation"/>
    <property type="evidence" value="ECO:0007669"/>
    <property type="project" value="UniProtKB-UniRule"/>
</dbReference>
<dbReference type="CDD" id="cd05797">
    <property type="entry name" value="Ribosomal_L10"/>
    <property type="match status" value="1"/>
</dbReference>
<dbReference type="FunFam" id="3.30.70.1730:FF:000001">
    <property type="entry name" value="50S ribosomal protein L10"/>
    <property type="match status" value="1"/>
</dbReference>
<dbReference type="Gene3D" id="3.30.70.1730">
    <property type="match status" value="1"/>
</dbReference>
<dbReference type="Gene3D" id="6.10.250.2350">
    <property type="match status" value="1"/>
</dbReference>
<dbReference type="HAMAP" id="MF_00362">
    <property type="entry name" value="Ribosomal_uL10"/>
    <property type="match status" value="1"/>
</dbReference>
<dbReference type="InterPro" id="IPR001790">
    <property type="entry name" value="Ribosomal_uL10"/>
</dbReference>
<dbReference type="InterPro" id="IPR043141">
    <property type="entry name" value="Ribosomal_uL10-like_sf"/>
</dbReference>
<dbReference type="InterPro" id="IPR022973">
    <property type="entry name" value="Ribosomal_uL10_bac"/>
</dbReference>
<dbReference type="InterPro" id="IPR047865">
    <property type="entry name" value="Ribosomal_uL10_bac_type"/>
</dbReference>
<dbReference type="InterPro" id="IPR002363">
    <property type="entry name" value="Ribosomal_uL10_CS_bac"/>
</dbReference>
<dbReference type="NCBIfam" id="NF000955">
    <property type="entry name" value="PRK00099.1-1"/>
    <property type="match status" value="1"/>
</dbReference>
<dbReference type="PANTHER" id="PTHR11560">
    <property type="entry name" value="39S RIBOSOMAL PROTEIN L10, MITOCHONDRIAL"/>
    <property type="match status" value="1"/>
</dbReference>
<dbReference type="Pfam" id="PF00466">
    <property type="entry name" value="Ribosomal_L10"/>
    <property type="match status" value="1"/>
</dbReference>
<dbReference type="SUPFAM" id="SSF160369">
    <property type="entry name" value="Ribosomal protein L10-like"/>
    <property type="match status" value="1"/>
</dbReference>
<dbReference type="PROSITE" id="PS01109">
    <property type="entry name" value="RIBOSOMAL_L10"/>
    <property type="match status" value="1"/>
</dbReference>